<keyword id="KW-0030">Aminoacyl-tRNA synthetase</keyword>
<keyword id="KW-0067">ATP-binding</keyword>
<keyword id="KW-0963">Cytoplasm</keyword>
<keyword id="KW-0436">Ligase</keyword>
<keyword id="KW-0547">Nucleotide-binding</keyword>
<keyword id="KW-0648">Protein biosynthesis</keyword>
<keyword id="KW-1185">Reference proteome</keyword>
<proteinExistence type="inferred from homology"/>
<reference key="1">
    <citation type="journal article" date="2007" name="Nat. Biotechnol.">
        <title>Genome sequence and identification of candidate vaccine antigens from the animal pathogen Dichelobacter nodosus.</title>
        <authorList>
            <person name="Myers G.S.A."/>
            <person name="Parker D."/>
            <person name="Al-Hasani K."/>
            <person name="Kennan R.M."/>
            <person name="Seemann T."/>
            <person name="Ren Q."/>
            <person name="Badger J.H."/>
            <person name="Selengut J.D."/>
            <person name="Deboy R.T."/>
            <person name="Tettelin H."/>
            <person name="Boyce J.D."/>
            <person name="McCarl V.P."/>
            <person name="Han X."/>
            <person name="Nelson W.C."/>
            <person name="Madupu R."/>
            <person name="Mohamoud Y."/>
            <person name="Holley T."/>
            <person name="Fedorova N."/>
            <person name="Khouri H."/>
            <person name="Bottomley S.P."/>
            <person name="Whittington R.J."/>
            <person name="Adler B."/>
            <person name="Songer J.G."/>
            <person name="Rood J.I."/>
            <person name="Paulsen I.T."/>
        </authorList>
    </citation>
    <scope>NUCLEOTIDE SEQUENCE [LARGE SCALE GENOMIC DNA]</scope>
    <source>
        <strain>VCS1703A</strain>
    </source>
</reference>
<accession>A5EWD6</accession>
<comment type="catalytic activity">
    <reaction evidence="1">
        <text>tRNA(Leu) + L-leucine + ATP = L-leucyl-tRNA(Leu) + AMP + diphosphate</text>
        <dbReference type="Rhea" id="RHEA:11688"/>
        <dbReference type="Rhea" id="RHEA-COMP:9613"/>
        <dbReference type="Rhea" id="RHEA-COMP:9622"/>
        <dbReference type="ChEBI" id="CHEBI:30616"/>
        <dbReference type="ChEBI" id="CHEBI:33019"/>
        <dbReference type="ChEBI" id="CHEBI:57427"/>
        <dbReference type="ChEBI" id="CHEBI:78442"/>
        <dbReference type="ChEBI" id="CHEBI:78494"/>
        <dbReference type="ChEBI" id="CHEBI:456215"/>
        <dbReference type="EC" id="6.1.1.4"/>
    </reaction>
</comment>
<comment type="subcellular location">
    <subcellularLocation>
        <location evidence="1">Cytoplasm</location>
    </subcellularLocation>
</comment>
<comment type="similarity">
    <text evidence="1">Belongs to the class-I aminoacyl-tRNA synthetase family.</text>
</comment>
<dbReference type="EC" id="6.1.1.4" evidence="1"/>
<dbReference type="EMBL" id="CP000513">
    <property type="protein sequence ID" value="ABQ13397.1"/>
    <property type="molecule type" value="Genomic_DNA"/>
</dbReference>
<dbReference type="RefSeq" id="WP_012030594.1">
    <property type="nucleotide sequence ID" value="NC_009446.1"/>
</dbReference>
<dbReference type="SMR" id="A5EWD6"/>
<dbReference type="STRING" id="246195.DNO_0246"/>
<dbReference type="KEGG" id="dno:DNO_0246"/>
<dbReference type="eggNOG" id="COG0495">
    <property type="taxonomic scope" value="Bacteria"/>
</dbReference>
<dbReference type="HOGENOM" id="CLU_004427_0_0_6"/>
<dbReference type="OrthoDB" id="9810365at2"/>
<dbReference type="Proteomes" id="UP000000248">
    <property type="component" value="Chromosome"/>
</dbReference>
<dbReference type="GO" id="GO:0005829">
    <property type="term" value="C:cytosol"/>
    <property type="evidence" value="ECO:0007669"/>
    <property type="project" value="TreeGrafter"/>
</dbReference>
<dbReference type="GO" id="GO:0002161">
    <property type="term" value="F:aminoacyl-tRNA deacylase activity"/>
    <property type="evidence" value="ECO:0007669"/>
    <property type="project" value="InterPro"/>
</dbReference>
<dbReference type="GO" id="GO:0005524">
    <property type="term" value="F:ATP binding"/>
    <property type="evidence" value="ECO:0007669"/>
    <property type="project" value="UniProtKB-UniRule"/>
</dbReference>
<dbReference type="GO" id="GO:0004823">
    <property type="term" value="F:leucine-tRNA ligase activity"/>
    <property type="evidence" value="ECO:0007669"/>
    <property type="project" value="UniProtKB-UniRule"/>
</dbReference>
<dbReference type="GO" id="GO:0006429">
    <property type="term" value="P:leucyl-tRNA aminoacylation"/>
    <property type="evidence" value="ECO:0007669"/>
    <property type="project" value="UniProtKB-UniRule"/>
</dbReference>
<dbReference type="CDD" id="cd07958">
    <property type="entry name" value="Anticodon_Ia_Leu_BEm"/>
    <property type="match status" value="1"/>
</dbReference>
<dbReference type="CDD" id="cd00812">
    <property type="entry name" value="LeuRS_core"/>
    <property type="match status" value="1"/>
</dbReference>
<dbReference type="FunFam" id="1.10.730.10:FF:000002">
    <property type="entry name" value="Leucine--tRNA ligase"/>
    <property type="match status" value="1"/>
</dbReference>
<dbReference type="FunFam" id="2.20.28.290:FF:000001">
    <property type="entry name" value="Leucine--tRNA ligase"/>
    <property type="match status" value="1"/>
</dbReference>
<dbReference type="FunFam" id="3.10.20.590:FF:000001">
    <property type="entry name" value="Leucine--tRNA ligase"/>
    <property type="match status" value="1"/>
</dbReference>
<dbReference type="FunFam" id="3.40.50.620:FF:000003">
    <property type="entry name" value="Leucine--tRNA ligase"/>
    <property type="match status" value="1"/>
</dbReference>
<dbReference type="FunFam" id="3.90.740.10:FF:000012">
    <property type="entry name" value="Leucine--tRNA ligase"/>
    <property type="match status" value="1"/>
</dbReference>
<dbReference type="Gene3D" id="2.20.28.290">
    <property type="match status" value="1"/>
</dbReference>
<dbReference type="Gene3D" id="3.10.20.590">
    <property type="match status" value="1"/>
</dbReference>
<dbReference type="Gene3D" id="3.40.50.620">
    <property type="entry name" value="HUPs"/>
    <property type="match status" value="2"/>
</dbReference>
<dbReference type="Gene3D" id="1.10.730.10">
    <property type="entry name" value="Isoleucyl-tRNA Synthetase, Domain 1"/>
    <property type="match status" value="2"/>
</dbReference>
<dbReference type="Gene3D" id="3.90.740.10">
    <property type="entry name" value="Valyl/Leucyl/Isoleucyl-tRNA synthetase, editing domain"/>
    <property type="match status" value="1"/>
</dbReference>
<dbReference type="HAMAP" id="MF_00049_B">
    <property type="entry name" value="Leu_tRNA_synth_B"/>
    <property type="match status" value="1"/>
</dbReference>
<dbReference type="InterPro" id="IPR001412">
    <property type="entry name" value="aa-tRNA-synth_I_CS"/>
</dbReference>
<dbReference type="InterPro" id="IPR002300">
    <property type="entry name" value="aa-tRNA-synth_Ia"/>
</dbReference>
<dbReference type="InterPro" id="IPR002302">
    <property type="entry name" value="Leu-tRNA-ligase"/>
</dbReference>
<dbReference type="InterPro" id="IPR025709">
    <property type="entry name" value="Leu_tRNA-synth_edit"/>
</dbReference>
<dbReference type="InterPro" id="IPR013155">
    <property type="entry name" value="M/V/L/I-tRNA-synth_anticd-bd"/>
</dbReference>
<dbReference type="InterPro" id="IPR015413">
    <property type="entry name" value="Methionyl/Leucyl_tRNA_Synth"/>
</dbReference>
<dbReference type="InterPro" id="IPR014729">
    <property type="entry name" value="Rossmann-like_a/b/a_fold"/>
</dbReference>
<dbReference type="InterPro" id="IPR009080">
    <property type="entry name" value="tRNAsynth_Ia_anticodon-bd"/>
</dbReference>
<dbReference type="InterPro" id="IPR009008">
    <property type="entry name" value="Val/Leu/Ile-tRNA-synth_edit"/>
</dbReference>
<dbReference type="NCBIfam" id="TIGR00396">
    <property type="entry name" value="leuS_bact"/>
    <property type="match status" value="1"/>
</dbReference>
<dbReference type="PANTHER" id="PTHR43740:SF2">
    <property type="entry name" value="LEUCINE--TRNA LIGASE, MITOCHONDRIAL"/>
    <property type="match status" value="1"/>
</dbReference>
<dbReference type="PANTHER" id="PTHR43740">
    <property type="entry name" value="LEUCYL-TRNA SYNTHETASE"/>
    <property type="match status" value="1"/>
</dbReference>
<dbReference type="Pfam" id="PF08264">
    <property type="entry name" value="Anticodon_1"/>
    <property type="match status" value="1"/>
</dbReference>
<dbReference type="Pfam" id="PF00133">
    <property type="entry name" value="tRNA-synt_1"/>
    <property type="match status" value="2"/>
</dbReference>
<dbReference type="Pfam" id="PF13603">
    <property type="entry name" value="tRNA-synt_1_2"/>
    <property type="match status" value="1"/>
</dbReference>
<dbReference type="Pfam" id="PF09334">
    <property type="entry name" value="tRNA-synt_1g"/>
    <property type="match status" value="1"/>
</dbReference>
<dbReference type="PRINTS" id="PR00985">
    <property type="entry name" value="TRNASYNTHLEU"/>
</dbReference>
<dbReference type="SUPFAM" id="SSF47323">
    <property type="entry name" value="Anticodon-binding domain of a subclass of class I aminoacyl-tRNA synthetases"/>
    <property type="match status" value="1"/>
</dbReference>
<dbReference type="SUPFAM" id="SSF52374">
    <property type="entry name" value="Nucleotidylyl transferase"/>
    <property type="match status" value="1"/>
</dbReference>
<dbReference type="SUPFAM" id="SSF50677">
    <property type="entry name" value="ValRS/IleRS/LeuRS editing domain"/>
    <property type="match status" value="1"/>
</dbReference>
<dbReference type="PROSITE" id="PS00178">
    <property type="entry name" value="AA_TRNA_LIGASE_I"/>
    <property type="match status" value="1"/>
</dbReference>
<gene>
    <name evidence="1" type="primary">leuS</name>
    <name type="ordered locus">DNO_0246</name>
</gene>
<evidence type="ECO:0000255" key="1">
    <source>
        <dbReference type="HAMAP-Rule" id="MF_00049"/>
    </source>
</evidence>
<protein>
    <recommendedName>
        <fullName evidence="1">Leucine--tRNA ligase</fullName>
        <ecNumber evidence="1">6.1.1.4</ecNumber>
    </recommendedName>
    <alternativeName>
        <fullName evidence="1">Leucyl-tRNA synthetase</fullName>
        <shortName evidence="1">LeuRS</shortName>
    </alternativeName>
</protein>
<sequence>MQDTYQPAQIEAAIQQQWANEERFKAVVNPQKEKFYCLSMFPYPSGKLHMGHVRNYTIGDVISRYQRMLGKNVLQPMGWDAFGMPAENAAMKNQVAPAQWTYQNIAEMKKQLQSLGFAIDWSREITTCRPDYYRWEQWLFTRLYQKGVIYRKLGAVNWDPVDQTVLANEQVIDGRGWRSGAIVEKREIPMYYFRITDYAEELLNDLEQLDGWPERVKMMQRNWIGKSRGMTIRFPIEPESQKGLSAENAQFLQIYTTRPDTIFGVTFLAVAAEHPLALAAAEDNPALRQFMTECKTGSVAEADLATMPKKGMATGRFVTHPLTGKRLPVWVGNYVLSGYGDAAVMGVPAHDERDFHFAHQYGLPIVQVIQTEKDLPAFNADSWQEWYGDKEEMHVIASDDCNGLNYDQAFEKLSEKLAALNLGEPKTQYRLRDWGISRQRYWGCPIPIIHHDDGEALADTLPVVLPEDKIPDGGGSVLAQSPDYYECRFQGKAARRETDTMDTFVESSWYQFRYMSPHYQKGMLDPEEVAYWQDVDQYIGGIEHAILHLLYARFFTKLLRDEGLVHTDEPFKKLLTQGMVLAGTWYREQEHGSKIWFNPADVQVKTDDKGRIIGGVLLSDGKPVQYGGMEKMSKSKNNGVDPQALIKTYGADTARLYTMFTAPPEASLEWSESGVEGAYRFLRRLWAYCYEFRHSIAKPSEVVPLNEKHQNIRREIHEQLRAARFDYERNQFNTVVSAGMKLFNCLNEIEPDYDALRREGVRILLLILSPIVPHITETLWQALDFSGVISDQALPEVDETALKQDNMTLVVQINGKRRGEISVATDAAQQNIIDCALADERFAPYLAGLTVQKTIYVPKKLVNIVAK</sequence>
<name>SYL_DICNV</name>
<feature type="chain" id="PRO_1000009336" description="Leucine--tRNA ligase">
    <location>
        <begin position="1"/>
        <end position="867"/>
    </location>
</feature>
<feature type="short sequence motif" description="'HIGH' region">
    <location>
        <begin position="42"/>
        <end position="52"/>
    </location>
</feature>
<feature type="short sequence motif" description="'KMSKS' region">
    <location>
        <begin position="631"/>
        <end position="635"/>
    </location>
</feature>
<feature type="binding site" evidence="1">
    <location>
        <position position="634"/>
    </location>
    <ligand>
        <name>ATP</name>
        <dbReference type="ChEBI" id="CHEBI:30616"/>
    </ligand>
</feature>
<organism>
    <name type="scientific">Dichelobacter nodosus (strain VCS1703A)</name>
    <dbReference type="NCBI Taxonomy" id="246195"/>
    <lineage>
        <taxon>Bacteria</taxon>
        <taxon>Pseudomonadati</taxon>
        <taxon>Pseudomonadota</taxon>
        <taxon>Gammaproteobacteria</taxon>
        <taxon>Cardiobacteriales</taxon>
        <taxon>Cardiobacteriaceae</taxon>
        <taxon>Dichelobacter</taxon>
    </lineage>
</organism>